<accession>A7H1A8</accession>
<sequence>MSKKALCIISGGMDSTLCAYLAKKEGYEIIALHFDYEQRTQEKEKECFKQICKALKVEKSYILDVSFIKDIGGNALTDKSIDIPKNELCISDIPPITYVPFRNGIFLSIAGSLAEKENCESIFIGVVEEDGSGYPDCTDEFIQKAQEFINEGTSKNFKVCIKTPLVRLNKAKIVELALKENVPLELTWSCYESEDEACGECDSCLLRLRGFEKAGFKDKIKYKS</sequence>
<gene>
    <name evidence="1" type="primary">queC</name>
    <name type="ordered locus">JJD26997_0016</name>
</gene>
<dbReference type="EC" id="6.3.4.20" evidence="1"/>
<dbReference type="EMBL" id="CP000768">
    <property type="protein sequence ID" value="ABS43180.1"/>
    <property type="molecule type" value="Genomic_DNA"/>
</dbReference>
<dbReference type="SMR" id="A7H1A8"/>
<dbReference type="KEGG" id="cjd:JJD26997_0016"/>
<dbReference type="HOGENOM" id="CLU_081854_1_0_7"/>
<dbReference type="UniPathway" id="UPA00391"/>
<dbReference type="Proteomes" id="UP000002302">
    <property type="component" value="Chromosome"/>
</dbReference>
<dbReference type="GO" id="GO:0005524">
    <property type="term" value="F:ATP binding"/>
    <property type="evidence" value="ECO:0007669"/>
    <property type="project" value="UniProtKB-UniRule"/>
</dbReference>
<dbReference type="GO" id="GO:0016879">
    <property type="term" value="F:ligase activity, forming carbon-nitrogen bonds"/>
    <property type="evidence" value="ECO:0007669"/>
    <property type="project" value="UniProtKB-UniRule"/>
</dbReference>
<dbReference type="GO" id="GO:0008270">
    <property type="term" value="F:zinc ion binding"/>
    <property type="evidence" value="ECO:0007669"/>
    <property type="project" value="UniProtKB-UniRule"/>
</dbReference>
<dbReference type="GO" id="GO:0008616">
    <property type="term" value="P:queuosine biosynthetic process"/>
    <property type="evidence" value="ECO:0007669"/>
    <property type="project" value="UniProtKB-UniRule"/>
</dbReference>
<dbReference type="CDD" id="cd01995">
    <property type="entry name" value="QueC-like"/>
    <property type="match status" value="1"/>
</dbReference>
<dbReference type="Gene3D" id="3.40.50.620">
    <property type="entry name" value="HUPs"/>
    <property type="match status" value="1"/>
</dbReference>
<dbReference type="HAMAP" id="MF_01633">
    <property type="entry name" value="QueC"/>
    <property type="match status" value="1"/>
</dbReference>
<dbReference type="InterPro" id="IPR018317">
    <property type="entry name" value="QueC"/>
</dbReference>
<dbReference type="InterPro" id="IPR014729">
    <property type="entry name" value="Rossmann-like_a/b/a_fold"/>
</dbReference>
<dbReference type="NCBIfam" id="TIGR00364">
    <property type="entry name" value="7-cyano-7-deazaguanine synthase QueC"/>
    <property type="match status" value="1"/>
</dbReference>
<dbReference type="PANTHER" id="PTHR42914">
    <property type="entry name" value="7-CYANO-7-DEAZAGUANINE SYNTHASE"/>
    <property type="match status" value="1"/>
</dbReference>
<dbReference type="PANTHER" id="PTHR42914:SF1">
    <property type="entry name" value="7-CYANO-7-DEAZAGUANINE SYNTHASE"/>
    <property type="match status" value="1"/>
</dbReference>
<dbReference type="Pfam" id="PF06508">
    <property type="entry name" value="QueC"/>
    <property type="match status" value="1"/>
</dbReference>
<dbReference type="PIRSF" id="PIRSF006293">
    <property type="entry name" value="ExsB"/>
    <property type="match status" value="1"/>
</dbReference>
<dbReference type="SUPFAM" id="SSF52402">
    <property type="entry name" value="Adenine nucleotide alpha hydrolases-like"/>
    <property type="match status" value="1"/>
</dbReference>
<name>QUEC_CAMJD</name>
<feature type="chain" id="PRO_1000069761" description="7-cyano-7-deazaguanine synthase">
    <location>
        <begin position="1"/>
        <end position="224"/>
    </location>
</feature>
<feature type="binding site" evidence="1">
    <location>
        <begin position="9"/>
        <end position="19"/>
    </location>
    <ligand>
        <name>ATP</name>
        <dbReference type="ChEBI" id="CHEBI:30616"/>
    </ligand>
</feature>
<feature type="binding site" evidence="1">
    <location>
        <position position="190"/>
    </location>
    <ligand>
        <name>Zn(2+)</name>
        <dbReference type="ChEBI" id="CHEBI:29105"/>
    </ligand>
</feature>
<feature type="binding site" evidence="1">
    <location>
        <position position="198"/>
    </location>
    <ligand>
        <name>Zn(2+)</name>
        <dbReference type="ChEBI" id="CHEBI:29105"/>
    </ligand>
</feature>
<feature type="binding site" evidence="1">
    <location>
        <position position="201"/>
    </location>
    <ligand>
        <name>Zn(2+)</name>
        <dbReference type="ChEBI" id="CHEBI:29105"/>
    </ligand>
</feature>
<feature type="binding site" evidence="1">
    <location>
        <position position="204"/>
    </location>
    <ligand>
        <name>Zn(2+)</name>
        <dbReference type="ChEBI" id="CHEBI:29105"/>
    </ligand>
</feature>
<organism>
    <name type="scientific">Campylobacter jejuni subsp. doylei (strain ATCC BAA-1458 / RM4099 / 269.97)</name>
    <dbReference type="NCBI Taxonomy" id="360109"/>
    <lineage>
        <taxon>Bacteria</taxon>
        <taxon>Pseudomonadati</taxon>
        <taxon>Campylobacterota</taxon>
        <taxon>Epsilonproteobacteria</taxon>
        <taxon>Campylobacterales</taxon>
        <taxon>Campylobacteraceae</taxon>
        <taxon>Campylobacter</taxon>
    </lineage>
</organism>
<reference key="1">
    <citation type="submission" date="2007-07" db="EMBL/GenBank/DDBJ databases">
        <title>Complete genome sequence of Campylobacter jejuni subsp doylei 269.97 isolated from human blood.</title>
        <authorList>
            <person name="Fouts D.E."/>
            <person name="Mongodin E.F."/>
            <person name="Puiu D."/>
            <person name="Sebastian Y."/>
            <person name="Miller W.G."/>
            <person name="Mandrell R.E."/>
            <person name="Lastovica A.J."/>
            <person name="Nelson K.E."/>
        </authorList>
    </citation>
    <scope>NUCLEOTIDE SEQUENCE [LARGE SCALE GENOMIC DNA]</scope>
    <source>
        <strain>ATCC BAA-1458 / RM4099 / 269.97</strain>
    </source>
</reference>
<proteinExistence type="inferred from homology"/>
<protein>
    <recommendedName>
        <fullName evidence="1">7-cyano-7-deazaguanine synthase</fullName>
        <ecNumber evidence="1">6.3.4.20</ecNumber>
    </recommendedName>
    <alternativeName>
        <fullName evidence="1">7-cyano-7-carbaguanine synthase</fullName>
    </alternativeName>
    <alternativeName>
        <fullName evidence="1">PreQ(0) synthase</fullName>
    </alternativeName>
    <alternativeName>
        <fullName evidence="1">Queuosine biosynthesis protein QueC</fullName>
    </alternativeName>
</protein>
<keyword id="KW-0067">ATP-binding</keyword>
<keyword id="KW-0436">Ligase</keyword>
<keyword id="KW-0479">Metal-binding</keyword>
<keyword id="KW-0547">Nucleotide-binding</keyword>
<keyword id="KW-0671">Queuosine biosynthesis</keyword>
<keyword id="KW-0862">Zinc</keyword>
<comment type="function">
    <text evidence="1">Catalyzes the ATP-dependent conversion of 7-carboxy-7-deazaguanine (CDG) to 7-cyano-7-deazaguanine (preQ(0)).</text>
</comment>
<comment type="catalytic activity">
    <reaction evidence="1">
        <text>7-carboxy-7-deazaguanine + NH4(+) + ATP = 7-cyano-7-deazaguanine + ADP + phosphate + H2O + H(+)</text>
        <dbReference type="Rhea" id="RHEA:27982"/>
        <dbReference type="ChEBI" id="CHEBI:15377"/>
        <dbReference type="ChEBI" id="CHEBI:15378"/>
        <dbReference type="ChEBI" id="CHEBI:28938"/>
        <dbReference type="ChEBI" id="CHEBI:30616"/>
        <dbReference type="ChEBI" id="CHEBI:43474"/>
        <dbReference type="ChEBI" id="CHEBI:45075"/>
        <dbReference type="ChEBI" id="CHEBI:61036"/>
        <dbReference type="ChEBI" id="CHEBI:456216"/>
        <dbReference type="EC" id="6.3.4.20"/>
    </reaction>
</comment>
<comment type="cofactor">
    <cofactor evidence="1">
        <name>Zn(2+)</name>
        <dbReference type="ChEBI" id="CHEBI:29105"/>
    </cofactor>
    <text evidence="1">Binds 1 zinc ion per subunit.</text>
</comment>
<comment type="pathway">
    <text evidence="1">Purine metabolism; 7-cyano-7-deazaguanine biosynthesis.</text>
</comment>
<comment type="similarity">
    <text evidence="1">Belongs to the QueC family.</text>
</comment>
<evidence type="ECO:0000255" key="1">
    <source>
        <dbReference type="HAMAP-Rule" id="MF_01633"/>
    </source>
</evidence>